<dbReference type="EMBL" id="X55676">
    <property type="protein sequence ID" value="CAA39211.1"/>
    <property type="molecule type" value="mRNA"/>
</dbReference>
<dbReference type="EMBL" id="Y14678">
    <property type="protein sequence ID" value="CAA74994.1"/>
    <property type="molecule type" value="mRNA"/>
</dbReference>
<dbReference type="EMBL" id="AE014297">
    <property type="protein sequence ID" value="AAF56304.1"/>
    <property type="molecule type" value="Genomic_DNA"/>
</dbReference>
<dbReference type="EMBL" id="AE014297">
    <property type="protein sequence ID" value="AAN13998.1"/>
    <property type="molecule type" value="Genomic_DNA"/>
</dbReference>
<dbReference type="EMBL" id="AY089498">
    <property type="protein sequence ID" value="AAL90236.1"/>
    <property type="status" value="ALT_FRAME"/>
    <property type="molecule type" value="mRNA"/>
</dbReference>
<dbReference type="PIR" id="S12899">
    <property type="entry name" value="S12899"/>
</dbReference>
<dbReference type="RefSeq" id="NP_524483.1">
    <molecule id="P25162-1"/>
    <property type="nucleotide sequence ID" value="NM_079759.4"/>
</dbReference>
<dbReference type="RefSeq" id="NP_733002.1">
    <molecule id="P25162-2"/>
    <property type="nucleotide sequence ID" value="NM_170147.3"/>
</dbReference>
<dbReference type="SMR" id="P25162"/>
<dbReference type="BioGRID" id="67846">
    <property type="interactions" value="1"/>
</dbReference>
<dbReference type="FunCoup" id="P25162">
    <property type="interactions" value="49"/>
</dbReference>
<dbReference type="STRING" id="7227.FBpp0084061"/>
<dbReference type="BindingDB" id="P25162"/>
<dbReference type="ChEMBL" id="CHEMBL2366470"/>
<dbReference type="DrugCentral" id="P25162"/>
<dbReference type="GlyCosmos" id="P25162">
    <property type="glycosylation" value="1 site, No reported glycans"/>
</dbReference>
<dbReference type="GlyGen" id="P25162">
    <property type="glycosylation" value="2 sites"/>
</dbReference>
<dbReference type="PaxDb" id="7227-FBpp0084061"/>
<dbReference type="EnsemblMetazoa" id="FBtr0084681">
    <molecule id="P25162-1"/>
    <property type="protein sequence ID" value="FBpp0084061"/>
    <property type="gene ID" value="FBgn0004118"/>
</dbReference>
<dbReference type="EnsemblMetazoa" id="FBtr0084682">
    <molecule id="P25162-2"/>
    <property type="protein sequence ID" value="FBpp0084062"/>
    <property type="gene ID" value="FBgn0004118"/>
</dbReference>
<dbReference type="GeneID" id="42920"/>
<dbReference type="KEGG" id="dme:Dmel_CG6798"/>
<dbReference type="AGR" id="FB:FBgn0004118"/>
<dbReference type="CTD" id="42920"/>
<dbReference type="FlyBase" id="FBgn0004118">
    <property type="gene designation" value="nAChRbeta2"/>
</dbReference>
<dbReference type="VEuPathDB" id="VectorBase:FBgn0004118"/>
<dbReference type="eggNOG" id="KOG3645">
    <property type="taxonomic scope" value="Eukaryota"/>
</dbReference>
<dbReference type="GeneTree" id="ENSGT00940000173136"/>
<dbReference type="HOGENOM" id="CLU_018074_1_0_1"/>
<dbReference type="InParanoid" id="P25162"/>
<dbReference type="OMA" id="QVFLNWM"/>
<dbReference type="OrthoDB" id="5975154at2759"/>
<dbReference type="PhylomeDB" id="P25162"/>
<dbReference type="Reactome" id="R-DME-629587">
    <property type="pathway name" value="Highly sodium permeable postsynaptic acetylcholine nicotinic receptors"/>
</dbReference>
<dbReference type="Reactome" id="R-DME-629594">
    <property type="pathway name" value="Highly calcium permeable postsynaptic nicotinic acetylcholine receptors"/>
</dbReference>
<dbReference type="Reactome" id="R-DME-629597">
    <property type="pathway name" value="Highly calcium permeable nicotinic acetylcholine receptors"/>
</dbReference>
<dbReference type="Reactome" id="R-DME-6798695">
    <property type="pathway name" value="Neutrophil degranulation"/>
</dbReference>
<dbReference type="BioGRID-ORCS" id="42920">
    <property type="hits" value="0 hits in 3 CRISPR screens"/>
</dbReference>
<dbReference type="GenomeRNAi" id="42920"/>
<dbReference type="PRO" id="PR:P25162"/>
<dbReference type="Proteomes" id="UP000000803">
    <property type="component" value="Chromosome 3R"/>
</dbReference>
<dbReference type="Bgee" id="FBgn0004118">
    <property type="expression patterns" value="Expressed in transmedullary neuron Tm29 in insect head and 104 other cell types or tissues"/>
</dbReference>
<dbReference type="ExpressionAtlas" id="P25162">
    <property type="expression patterns" value="baseline and differential"/>
</dbReference>
<dbReference type="GO" id="GO:0005892">
    <property type="term" value="C:acetylcholine-gated channel complex"/>
    <property type="evidence" value="ECO:0000318"/>
    <property type="project" value="GO_Central"/>
</dbReference>
<dbReference type="GO" id="GO:0043005">
    <property type="term" value="C:neuron projection"/>
    <property type="evidence" value="ECO:0000318"/>
    <property type="project" value="GO_Central"/>
</dbReference>
<dbReference type="GO" id="GO:0005886">
    <property type="term" value="C:plasma membrane"/>
    <property type="evidence" value="ECO:0000318"/>
    <property type="project" value="GO_Central"/>
</dbReference>
<dbReference type="GO" id="GO:0045211">
    <property type="term" value="C:postsynaptic membrane"/>
    <property type="evidence" value="ECO:0007669"/>
    <property type="project" value="UniProtKB-SubCell"/>
</dbReference>
<dbReference type="GO" id="GO:0045202">
    <property type="term" value="C:synapse"/>
    <property type="evidence" value="ECO:0000318"/>
    <property type="project" value="GO_Central"/>
</dbReference>
<dbReference type="GO" id="GO:0022848">
    <property type="term" value="F:acetylcholine-gated monoatomic cation-selective channel activity"/>
    <property type="evidence" value="ECO:0000318"/>
    <property type="project" value="GO_Central"/>
</dbReference>
<dbReference type="GO" id="GO:0004888">
    <property type="term" value="F:transmembrane signaling receptor activity"/>
    <property type="evidence" value="ECO:0007669"/>
    <property type="project" value="InterPro"/>
</dbReference>
<dbReference type="GO" id="GO:0007268">
    <property type="term" value="P:chemical synaptic transmission"/>
    <property type="evidence" value="ECO:0000318"/>
    <property type="project" value="GO_Central"/>
</dbReference>
<dbReference type="GO" id="GO:0034220">
    <property type="term" value="P:monoatomic ion transmembrane transport"/>
    <property type="evidence" value="ECO:0000318"/>
    <property type="project" value="GO_Central"/>
</dbReference>
<dbReference type="GO" id="GO:0042391">
    <property type="term" value="P:regulation of membrane potential"/>
    <property type="evidence" value="ECO:0000318"/>
    <property type="project" value="GO_Central"/>
</dbReference>
<dbReference type="GO" id="GO:0017085">
    <property type="term" value="P:response to insecticide"/>
    <property type="evidence" value="ECO:0000315"/>
    <property type="project" value="FlyBase"/>
</dbReference>
<dbReference type="GO" id="GO:0007271">
    <property type="term" value="P:synaptic transmission, cholinergic"/>
    <property type="evidence" value="ECO:0000270"/>
    <property type="project" value="FlyBase"/>
</dbReference>
<dbReference type="CDD" id="cd19031">
    <property type="entry name" value="LGIC_ECD_nAChR_proto_alpha-like"/>
    <property type="match status" value="1"/>
</dbReference>
<dbReference type="CDD" id="cd19064">
    <property type="entry name" value="LGIC_TM_nAChR"/>
    <property type="match status" value="1"/>
</dbReference>
<dbReference type="FunFam" id="2.70.170.10:FF:000013">
    <property type="entry name" value="Acetylcholine receptor subunit alpha"/>
    <property type="match status" value="1"/>
</dbReference>
<dbReference type="FunFam" id="1.20.58.390:FF:000030">
    <property type="entry name" value="Acetylcholine receptor subunit alpha-L1"/>
    <property type="match status" value="1"/>
</dbReference>
<dbReference type="FunFam" id="1.20.58.390:FF:000012">
    <property type="entry name" value="Acetylcholine receptor subunit alpha-like"/>
    <property type="match status" value="1"/>
</dbReference>
<dbReference type="Gene3D" id="2.70.170.10">
    <property type="entry name" value="Neurotransmitter-gated ion-channel ligand-binding domain"/>
    <property type="match status" value="1"/>
</dbReference>
<dbReference type="Gene3D" id="1.20.58.390">
    <property type="entry name" value="Neurotransmitter-gated ion-channel transmembrane domain"/>
    <property type="match status" value="2"/>
</dbReference>
<dbReference type="InterPro" id="IPR006202">
    <property type="entry name" value="Neur_chan_lig-bd"/>
</dbReference>
<dbReference type="InterPro" id="IPR036734">
    <property type="entry name" value="Neur_chan_lig-bd_sf"/>
</dbReference>
<dbReference type="InterPro" id="IPR006201">
    <property type="entry name" value="Neur_channel"/>
</dbReference>
<dbReference type="InterPro" id="IPR036719">
    <property type="entry name" value="Neuro-gated_channel_TM_sf"/>
</dbReference>
<dbReference type="InterPro" id="IPR038050">
    <property type="entry name" value="Neuro_actylchol_rec"/>
</dbReference>
<dbReference type="InterPro" id="IPR006029">
    <property type="entry name" value="Neurotrans-gated_channel_TM"/>
</dbReference>
<dbReference type="InterPro" id="IPR018000">
    <property type="entry name" value="Neurotransmitter_ion_chnl_CS"/>
</dbReference>
<dbReference type="InterPro" id="IPR002394">
    <property type="entry name" value="Nicotinic_acetylcholine_rcpt"/>
</dbReference>
<dbReference type="NCBIfam" id="TIGR00860">
    <property type="entry name" value="LIC"/>
    <property type="match status" value="1"/>
</dbReference>
<dbReference type="PANTHER" id="PTHR18945">
    <property type="entry name" value="NEUROTRANSMITTER GATED ION CHANNEL"/>
    <property type="match status" value="1"/>
</dbReference>
<dbReference type="Pfam" id="PF02931">
    <property type="entry name" value="Neur_chan_LBD"/>
    <property type="match status" value="1"/>
</dbReference>
<dbReference type="Pfam" id="PF02932">
    <property type="entry name" value="Neur_chan_memb"/>
    <property type="match status" value="1"/>
</dbReference>
<dbReference type="PRINTS" id="PR00254">
    <property type="entry name" value="NICOTINICR"/>
</dbReference>
<dbReference type="PRINTS" id="PR00252">
    <property type="entry name" value="NRIONCHANNEL"/>
</dbReference>
<dbReference type="SUPFAM" id="SSF90112">
    <property type="entry name" value="Neurotransmitter-gated ion-channel transmembrane pore"/>
    <property type="match status" value="1"/>
</dbReference>
<dbReference type="SUPFAM" id="SSF63712">
    <property type="entry name" value="Nicotinic receptor ligand binding domain-like"/>
    <property type="match status" value="1"/>
</dbReference>
<dbReference type="PROSITE" id="PS00236">
    <property type="entry name" value="NEUROTR_ION_CHANNEL"/>
    <property type="match status" value="1"/>
</dbReference>
<feature type="signal peptide" evidence="2">
    <location>
        <begin position="1"/>
        <end position="18"/>
    </location>
</feature>
<feature type="chain" id="PRO_0000000302" description="Acetylcholine receptor subunit beta-like 2">
    <location>
        <begin position="19"/>
        <end position="519"/>
    </location>
</feature>
<feature type="topological domain" description="Extracellular">
    <location>
        <begin position="19"/>
        <end position="244"/>
    </location>
</feature>
<feature type="transmembrane region" description="Helical" evidence="2">
    <location>
        <begin position="245"/>
        <end position="269"/>
    </location>
</feature>
<feature type="transmembrane region" description="Helical" evidence="2">
    <location>
        <begin position="277"/>
        <end position="295"/>
    </location>
</feature>
<feature type="transmembrane region" description="Helical" evidence="2">
    <location>
        <begin position="311"/>
        <end position="332"/>
    </location>
</feature>
<feature type="topological domain" description="Cytoplasmic">
    <location>
        <begin position="333"/>
        <end position="462"/>
    </location>
</feature>
<feature type="transmembrane region" description="Helical" evidence="2">
    <location>
        <begin position="463"/>
        <end position="481"/>
    </location>
</feature>
<feature type="glycosylation site" description="N-linked (GlcNAc...) asparagine" evidence="2">
    <location>
        <position position="50"/>
    </location>
</feature>
<feature type="disulfide bond" evidence="1">
    <location>
        <begin position="154"/>
        <end position="168"/>
    </location>
</feature>
<feature type="splice variant" id="VSP_007411" description="In isoform B." evidence="5">
    <original>LCISILVSLTVFFLLLAEIIPPTSLA</original>
    <variation>KMDPPNSMIKNLRVIPSFLWHVACFC</variation>
    <location>
        <begin position="279"/>
        <end position="304"/>
    </location>
</feature>
<feature type="splice variant" id="VSP_007412" description="In isoform B." evidence="5">
    <location>
        <begin position="305"/>
        <end position="519"/>
    </location>
</feature>
<feature type="sequence variant" description="In RNA edited version.">
    <original>T</original>
    <variation>A</variation>
    <location>
        <position position="278"/>
    </location>
</feature>
<feature type="sequence conflict" description="In Ref. 1; CAA39211." evidence="6" ref="1">
    <original>P</original>
    <variation>R</variation>
    <location>
        <position position="344"/>
    </location>
</feature>
<sequence>MWHWSLLCVFLLVPLANSTAPISFEANPDTKRLYDDLLSNYNRLIRPVVNNTETLTVWLGLKLSQLIEVNLKNQVMTTNLWVKQRWFDYKLRWDPEEYGGVEQLYVPSEHIWVPDIVLYNNWDGNYEVTLMTKATLKYTGEVFWEPPAIYKSSCEMNVEYFPYDEQICFMKFGSWTYNGAQVDLKHLDQIPGSNLVQVGIDLTEFYLSVEWDILEVPATKNEEYYPDTLEPFSDITFKLTMRRKTLFYTVNLIVPCVALTFLTVLVFYLPSDSGEKVTLCISILVSLTVFFLLLAEIIPPTSLAVPLLGKYLLFTMILVSLSVWTTVCVLNIHFRSPSTHNMSPLVRKLFLHFMPKLMMMRRTQYTLPDYDDSTPSNGYTNEIDVRDSISDFPSEFKDSQDGAYDNGMQNSVDSDNVIPRNLTPEVLQALRAVRFIAQHIKDADKDNEIVEDWKFVSMVLDRFFLWLFTLSCVFGTLAIICQSPSLYDTRSPIDRQLSEIPLRKNNFMLPPDIVRQVLT</sequence>
<gene>
    <name type="primary">nAChRbeta2</name>
    <name type="synonym">Acr96Ac</name>
    <name type="synonym">AcrF</name>
    <name type="synonym">nAcRbeta-96</name>
    <name type="synonym">SBD</name>
    <name type="ORF">CG6798</name>
</gene>
<reference key="1">
    <citation type="journal article" date="1990" name="FEBS Lett.">
        <title>SBD, a novel structural subunit of the Drosophila nicotinic acetylcholine receptor, shares its genomic localization with two alpha-subunits.</title>
        <authorList>
            <person name="Sawruk E."/>
            <person name="Udri C."/>
            <person name="Betz H."/>
            <person name="Schmitt B."/>
        </authorList>
    </citation>
    <scope>NUCLEOTIDE SEQUENCE [MRNA] OF 20-519 (ISOFORM A)</scope>
    <scope>TISSUE SPECIFICITY</scope>
    <scope>DEVELOPMENTAL STAGE</scope>
    <source>
        <strain>Canton-S</strain>
        <tissue>Embryo</tissue>
    </source>
</reference>
<reference key="2">
    <citation type="journal article" date="1997" name="J. Neurochem.">
        <title>Temperature-sensitive expression of Drosophila neuronal nicotinic acetylcholine receptors.</title>
        <authorList>
            <person name="Lansdell S.J."/>
            <person name="Schmitt B."/>
            <person name="Betz H."/>
            <person name="Sattelle D.B."/>
            <person name="Millar N.S."/>
        </authorList>
    </citation>
    <scope>NUCLEOTIDE SEQUENCE [MRNA] OF 1-65</scope>
</reference>
<reference key="3">
    <citation type="journal article" date="2000" name="Science">
        <title>The genome sequence of Drosophila melanogaster.</title>
        <authorList>
            <person name="Adams M.D."/>
            <person name="Celniker S.E."/>
            <person name="Holt R.A."/>
            <person name="Evans C.A."/>
            <person name="Gocayne J.D."/>
            <person name="Amanatides P.G."/>
            <person name="Scherer S.E."/>
            <person name="Li P.W."/>
            <person name="Hoskins R.A."/>
            <person name="Galle R.F."/>
            <person name="George R.A."/>
            <person name="Lewis S.E."/>
            <person name="Richards S."/>
            <person name="Ashburner M."/>
            <person name="Henderson S.N."/>
            <person name="Sutton G.G."/>
            <person name="Wortman J.R."/>
            <person name="Yandell M.D."/>
            <person name="Zhang Q."/>
            <person name="Chen L.X."/>
            <person name="Brandon R.C."/>
            <person name="Rogers Y.-H.C."/>
            <person name="Blazej R.G."/>
            <person name="Champe M."/>
            <person name="Pfeiffer B.D."/>
            <person name="Wan K.H."/>
            <person name="Doyle C."/>
            <person name="Baxter E.G."/>
            <person name="Helt G."/>
            <person name="Nelson C.R."/>
            <person name="Miklos G.L.G."/>
            <person name="Abril J.F."/>
            <person name="Agbayani A."/>
            <person name="An H.-J."/>
            <person name="Andrews-Pfannkoch C."/>
            <person name="Baldwin D."/>
            <person name="Ballew R.M."/>
            <person name="Basu A."/>
            <person name="Baxendale J."/>
            <person name="Bayraktaroglu L."/>
            <person name="Beasley E.M."/>
            <person name="Beeson K.Y."/>
            <person name="Benos P.V."/>
            <person name="Berman B.P."/>
            <person name="Bhandari D."/>
            <person name="Bolshakov S."/>
            <person name="Borkova D."/>
            <person name="Botchan M.R."/>
            <person name="Bouck J."/>
            <person name="Brokstein P."/>
            <person name="Brottier P."/>
            <person name="Burtis K.C."/>
            <person name="Busam D.A."/>
            <person name="Butler H."/>
            <person name="Cadieu E."/>
            <person name="Center A."/>
            <person name="Chandra I."/>
            <person name="Cherry J.M."/>
            <person name="Cawley S."/>
            <person name="Dahlke C."/>
            <person name="Davenport L.B."/>
            <person name="Davies P."/>
            <person name="de Pablos B."/>
            <person name="Delcher A."/>
            <person name="Deng Z."/>
            <person name="Mays A.D."/>
            <person name="Dew I."/>
            <person name="Dietz S.M."/>
            <person name="Dodson K."/>
            <person name="Doup L.E."/>
            <person name="Downes M."/>
            <person name="Dugan-Rocha S."/>
            <person name="Dunkov B.C."/>
            <person name="Dunn P."/>
            <person name="Durbin K.J."/>
            <person name="Evangelista C.C."/>
            <person name="Ferraz C."/>
            <person name="Ferriera S."/>
            <person name="Fleischmann W."/>
            <person name="Fosler C."/>
            <person name="Gabrielian A.E."/>
            <person name="Garg N.S."/>
            <person name="Gelbart W.M."/>
            <person name="Glasser K."/>
            <person name="Glodek A."/>
            <person name="Gong F."/>
            <person name="Gorrell J.H."/>
            <person name="Gu Z."/>
            <person name="Guan P."/>
            <person name="Harris M."/>
            <person name="Harris N.L."/>
            <person name="Harvey D.A."/>
            <person name="Heiman T.J."/>
            <person name="Hernandez J.R."/>
            <person name="Houck J."/>
            <person name="Hostin D."/>
            <person name="Houston K.A."/>
            <person name="Howland T.J."/>
            <person name="Wei M.-H."/>
            <person name="Ibegwam C."/>
            <person name="Jalali M."/>
            <person name="Kalush F."/>
            <person name="Karpen G.H."/>
            <person name="Ke Z."/>
            <person name="Kennison J.A."/>
            <person name="Ketchum K.A."/>
            <person name="Kimmel B.E."/>
            <person name="Kodira C.D."/>
            <person name="Kraft C.L."/>
            <person name="Kravitz S."/>
            <person name="Kulp D."/>
            <person name="Lai Z."/>
            <person name="Lasko P."/>
            <person name="Lei Y."/>
            <person name="Levitsky A.A."/>
            <person name="Li J.H."/>
            <person name="Li Z."/>
            <person name="Liang Y."/>
            <person name="Lin X."/>
            <person name="Liu X."/>
            <person name="Mattei B."/>
            <person name="McIntosh T.C."/>
            <person name="McLeod M.P."/>
            <person name="McPherson D."/>
            <person name="Merkulov G."/>
            <person name="Milshina N.V."/>
            <person name="Mobarry C."/>
            <person name="Morris J."/>
            <person name="Moshrefi A."/>
            <person name="Mount S.M."/>
            <person name="Moy M."/>
            <person name="Murphy B."/>
            <person name="Murphy L."/>
            <person name="Muzny D.M."/>
            <person name="Nelson D.L."/>
            <person name="Nelson D.R."/>
            <person name="Nelson K.A."/>
            <person name="Nixon K."/>
            <person name="Nusskern D.R."/>
            <person name="Pacleb J.M."/>
            <person name="Palazzolo M."/>
            <person name="Pittman G.S."/>
            <person name="Pan S."/>
            <person name="Pollard J."/>
            <person name="Puri V."/>
            <person name="Reese M.G."/>
            <person name="Reinert K."/>
            <person name="Remington K."/>
            <person name="Saunders R.D.C."/>
            <person name="Scheeler F."/>
            <person name="Shen H."/>
            <person name="Shue B.C."/>
            <person name="Siden-Kiamos I."/>
            <person name="Simpson M."/>
            <person name="Skupski M.P."/>
            <person name="Smith T.J."/>
            <person name="Spier E."/>
            <person name="Spradling A.C."/>
            <person name="Stapleton M."/>
            <person name="Strong R."/>
            <person name="Sun E."/>
            <person name="Svirskas R."/>
            <person name="Tector C."/>
            <person name="Turner R."/>
            <person name="Venter E."/>
            <person name="Wang A.H."/>
            <person name="Wang X."/>
            <person name="Wang Z.-Y."/>
            <person name="Wassarman D.A."/>
            <person name="Weinstock G.M."/>
            <person name="Weissenbach J."/>
            <person name="Williams S.M."/>
            <person name="Woodage T."/>
            <person name="Worley K.C."/>
            <person name="Wu D."/>
            <person name="Yang S."/>
            <person name="Yao Q.A."/>
            <person name="Ye J."/>
            <person name="Yeh R.-F."/>
            <person name="Zaveri J.S."/>
            <person name="Zhan M."/>
            <person name="Zhang G."/>
            <person name="Zhao Q."/>
            <person name="Zheng L."/>
            <person name="Zheng X.H."/>
            <person name="Zhong F.N."/>
            <person name="Zhong W."/>
            <person name="Zhou X."/>
            <person name="Zhu S.C."/>
            <person name="Zhu X."/>
            <person name="Smith H.O."/>
            <person name="Gibbs R.A."/>
            <person name="Myers E.W."/>
            <person name="Rubin G.M."/>
            <person name="Venter J.C."/>
        </authorList>
    </citation>
    <scope>NUCLEOTIDE SEQUENCE [LARGE SCALE GENOMIC DNA]</scope>
    <source>
        <strain>Berkeley</strain>
    </source>
</reference>
<reference key="4">
    <citation type="journal article" date="2002" name="Genome Biol.">
        <title>Annotation of the Drosophila melanogaster euchromatic genome: a systematic review.</title>
        <authorList>
            <person name="Misra S."/>
            <person name="Crosby M.A."/>
            <person name="Mungall C.J."/>
            <person name="Matthews B.B."/>
            <person name="Campbell K.S."/>
            <person name="Hradecky P."/>
            <person name="Huang Y."/>
            <person name="Kaminker J.S."/>
            <person name="Millburn G.H."/>
            <person name="Prochnik S.E."/>
            <person name="Smith C.D."/>
            <person name="Tupy J.L."/>
            <person name="Whitfield E.J."/>
            <person name="Bayraktaroglu L."/>
            <person name="Berman B.P."/>
            <person name="Bettencourt B.R."/>
            <person name="Celniker S.E."/>
            <person name="de Grey A.D.N.J."/>
            <person name="Drysdale R.A."/>
            <person name="Harris N.L."/>
            <person name="Richter J."/>
            <person name="Russo S."/>
            <person name="Schroeder A.J."/>
            <person name="Shu S.Q."/>
            <person name="Stapleton M."/>
            <person name="Yamada C."/>
            <person name="Ashburner M."/>
            <person name="Gelbart W.M."/>
            <person name="Rubin G.M."/>
            <person name="Lewis S.E."/>
        </authorList>
    </citation>
    <scope>GENOME REANNOTATION</scope>
    <scope>ALTERNATIVE SPLICING</scope>
    <source>
        <strain>Berkeley</strain>
    </source>
</reference>
<reference key="5">
    <citation type="journal article" date="2002" name="Genome Biol.">
        <title>A Drosophila full-length cDNA resource.</title>
        <authorList>
            <person name="Stapleton M."/>
            <person name="Carlson J.W."/>
            <person name="Brokstein P."/>
            <person name="Yu C."/>
            <person name="Champe M."/>
            <person name="George R.A."/>
            <person name="Guarin H."/>
            <person name="Kronmiller B."/>
            <person name="Pacleb J.M."/>
            <person name="Park S."/>
            <person name="Wan K.H."/>
            <person name="Rubin G.M."/>
            <person name="Celniker S.E."/>
        </authorList>
    </citation>
    <scope>NUCLEOTIDE SEQUENCE [LARGE SCALE MRNA] (ISOFORM B)</scope>
    <source>
        <strain>Berkeley</strain>
        <tissue>Head</tissue>
    </source>
</reference>
<reference key="6">
    <citation type="journal article" date="2003" name="Science">
        <title>Nervous system targets of RNA editing identified by comparative genomics.</title>
        <authorList>
            <person name="Hoopengardner B."/>
            <person name="Bhalla T."/>
            <person name="Staber C."/>
            <person name="Reenan R."/>
        </authorList>
    </citation>
    <scope>RNA EDITING OF POSITION 278</scope>
</reference>
<evidence type="ECO:0000250" key="1"/>
<evidence type="ECO:0000255" key="2"/>
<evidence type="ECO:0000269" key="3">
    <source>
    </source>
</evidence>
<evidence type="ECO:0000269" key="4">
    <source>
    </source>
</evidence>
<evidence type="ECO:0000303" key="5">
    <source>
    </source>
</evidence>
<evidence type="ECO:0000305" key="6"/>
<name>ACH4_DROME</name>
<proteinExistence type="evidence at transcript level"/>
<comment type="function">
    <text evidence="1">After binding acetylcholine, the AChR responds by an extensive change in conformation that affects all subunits and leads to opening of an ion-conducting channel across the plasma membrane.</text>
</comment>
<comment type="subcellular location">
    <subcellularLocation>
        <location>Postsynaptic cell membrane</location>
        <topology>Multi-pass membrane protein</topology>
    </subcellularLocation>
    <subcellularLocation>
        <location evidence="1">Cell membrane</location>
        <topology evidence="1">Multi-pass membrane protein</topology>
    </subcellularLocation>
</comment>
<comment type="alternative products">
    <event type="alternative splicing"/>
    <isoform>
        <id>P25162-1</id>
        <name>A</name>
        <sequence type="displayed"/>
    </isoform>
    <isoform>
        <id>P25162-2</id>
        <name>B</name>
        <sequence type="described" ref="VSP_007411 VSP_007412"/>
    </isoform>
</comment>
<comment type="tissue specificity">
    <text evidence="4">CNS in embryos.</text>
</comment>
<comment type="developmental stage">
    <text evidence="4">Late embryonic and late pupal stages.</text>
</comment>
<comment type="RNA editing">
    <location>
        <position position="278" evidence="3"/>
    </location>
    <text>Partially edited.</text>
</comment>
<comment type="similarity">
    <text evidence="6">Belongs to the ligand-gated ion channel (TC 1.A.9) family. Acetylcholine receptor (TC 1.A.9.1) subfamily.</text>
</comment>
<comment type="sequence caution" evidence="6">
    <conflict type="frameshift">
        <sequence resource="EMBL-CDS" id="AAL90236"/>
    </conflict>
</comment>
<protein>
    <recommendedName>
        <fullName>Acetylcholine receptor subunit beta-like 2</fullName>
    </recommendedName>
    <alternativeName>
        <fullName>Nicotinic acetylcholine receptor beta 2</fullName>
    </alternativeName>
</protein>
<keyword id="KW-0025">Alternative splicing</keyword>
<keyword id="KW-1003">Cell membrane</keyword>
<keyword id="KW-1015">Disulfide bond</keyword>
<keyword id="KW-0325">Glycoprotein</keyword>
<keyword id="KW-0407">Ion channel</keyword>
<keyword id="KW-0406">Ion transport</keyword>
<keyword id="KW-1071">Ligand-gated ion channel</keyword>
<keyword id="KW-0472">Membrane</keyword>
<keyword id="KW-0628">Postsynaptic cell membrane</keyword>
<keyword id="KW-0675">Receptor</keyword>
<keyword id="KW-1185">Reference proteome</keyword>
<keyword id="KW-0691">RNA editing</keyword>
<keyword id="KW-0732">Signal</keyword>
<keyword id="KW-0770">Synapse</keyword>
<keyword id="KW-0812">Transmembrane</keyword>
<keyword id="KW-1133">Transmembrane helix</keyword>
<keyword id="KW-0813">Transport</keyword>
<organism>
    <name type="scientific">Drosophila melanogaster</name>
    <name type="common">Fruit fly</name>
    <dbReference type="NCBI Taxonomy" id="7227"/>
    <lineage>
        <taxon>Eukaryota</taxon>
        <taxon>Metazoa</taxon>
        <taxon>Ecdysozoa</taxon>
        <taxon>Arthropoda</taxon>
        <taxon>Hexapoda</taxon>
        <taxon>Insecta</taxon>
        <taxon>Pterygota</taxon>
        <taxon>Neoptera</taxon>
        <taxon>Endopterygota</taxon>
        <taxon>Diptera</taxon>
        <taxon>Brachycera</taxon>
        <taxon>Muscomorpha</taxon>
        <taxon>Ephydroidea</taxon>
        <taxon>Drosophilidae</taxon>
        <taxon>Drosophila</taxon>
        <taxon>Sophophora</taxon>
    </lineage>
</organism>
<accession>P25162</accession>
<accession>O18403</accession>
<accession>Q8IMW6</accession>
<accession>Q8SXP7</accession>
<accession>Q9VC71</accession>